<reference key="1">
    <citation type="journal article" date="2007" name="Genes Dev.">
        <title>New insights into Acinetobacter baumannii pathogenesis revealed by high-density pyrosequencing and transposon mutagenesis.</title>
        <authorList>
            <person name="Smith M.G."/>
            <person name="Gianoulis T.A."/>
            <person name="Pukatzki S."/>
            <person name="Mekalanos J.J."/>
            <person name="Ornston L.N."/>
            <person name="Gerstein M."/>
            <person name="Snyder M."/>
        </authorList>
    </citation>
    <scope>NUCLEOTIDE SEQUENCE [LARGE SCALE GENOMIC DNA]</scope>
    <source>
        <strain>ATCC 17978 / DSM 105126 / CIP 53.77 / LMG 1025 / NCDC KC755 / 5377</strain>
    </source>
</reference>
<accession>A3M7R2</accession>
<evidence type="ECO:0000255" key="1">
    <source>
        <dbReference type="HAMAP-Rule" id="MF_00811"/>
    </source>
</evidence>
<feature type="chain" id="PRO_1000047111" description="2,3,4,5-tetrahydropyridine-2,6-dicarboxylate N-succinyltransferase">
    <location>
        <begin position="1"/>
        <end position="273"/>
    </location>
</feature>
<feature type="binding site" evidence="1">
    <location>
        <position position="104"/>
    </location>
    <ligand>
        <name>substrate</name>
    </ligand>
</feature>
<feature type="binding site" evidence="1">
    <location>
        <position position="141"/>
    </location>
    <ligand>
        <name>substrate</name>
    </ligand>
</feature>
<proteinExistence type="inferred from homology"/>
<sequence>MSQLSTIIEQAFEDRANFTAADCPSEIRQAVEEAIAGLDNGTLRVAEKINGEWVVHQWLKKAVLLSFKLNDNKPIESCDLRFYDKVETKFSGWTEEQFKAAGVRVVPPAVARRGSFQAKNVVLMPSYVNIGAYVDEGTMVDTWATVGSCAQIGKNVHLSGGVGIGGVLEPLQANPTIIEDNCFIGARSEIVEGVIVEEGSVISMGVYIGQSTRIYDRETGEIHYGRVPAGSVVVPGNLPSADGKYSLYAAIIVKKVDAQTRAKTSLNDLLRAD</sequence>
<keyword id="KW-0012">Acyltransferase</keyword>
<keyword id="KW-0028">Amino-acid biosynthesis</keyword>
<keyword id="KW-0963">Cytoplasm</keyword>
<keyword id="KW-0220">Diaminopimelate biosynthesis</keyword>
<keyword id="KW-0457">Lysine biosynthesis</keyword>
<keyword id="KW-0677">Repeat</keyword>
<keyword id="KW-0808">Transferase</keyword>
<dbReference type="EC" id="2.3.1.117" evidence="1"/>
<dbReference type="EMBL" id="CP000521">
    <property type="protein sequence ID" value="ABO12956.1"/>
    <property type="molecule type" value="Genomic_DNA"/>
</dbReference>
<dbReference type="RefSeq" id="WP_000080867.1">
    <property type="nucleotide sequence ID" value="NZ_CP053098.1"/>
</dbReference>
<dbReference type="SMR" id="A3M7R2"/>
<dbReference type="GeneID" id="92894847"/>
<dbReference type="KEGG" id="acb:A1S_2539"/>
<dbReference type="HOGENOM" id="CLU_050859_0_1_6"/>
<dbReference type="UniPathway" id="UPA00034">
    <property type="reaction ID" value="UER00019"/>
</dbReference>
<dbReference type="GO" id="GO:0005737">
    <property type="term" value="C:cytoplasm"/>
    <property type="evidence" value="ECO:0007669"/>
    <property type="project" value="UniProtKB-SubCell"/>
</dbReference>
<dbReference type="GO" id="GO:0008666">
    <property type="term" value="F:2,3,4,5-tetrahydropyridine-2,6-dicarboxylate N-succinyltransferase activity"/>
    <property type="evidence" value="ECO:0007669"/>
    <property type="project" value="UniProtKB-UniRule"/>
</dbReference>
<dbReference type="GO" id="GO:0016779">
    <property type="term" value="F:nucleotidyltransferase activity"/>
    <property type="evidence" value="ECO:0007669"/>
    <property type="project" value="TreeGrafter"/>
</dbReference>
<dbReference type="GO" id="GO:0019877">
    <property type="term" value="P:diaminopimelate biosynthetic process"/>
    <property type="evidence" value="ECO:0007669"/>
    <property type="project" value="UniProtKB-UniRule"/>
</dbReference>
<dbReference type="GO" id="GO:0009089">
    <property type="term" value="P:lysine biosynthetic process via diaminopimelate"/>
    <property type="evidence" value="ECO:0007669"/>
    <property type="project" value="UniProtKB-UniRule"/>
</dbReference>
<dbReference type="CDD" id="cd03350">
    <property type="entry name" value="LbH_THP_succinylT"/>
    <property type="match status" value="1"/>
</dbReference>
<dbReference type="Gene3D" id="2.160.10.10">
    <property type="entry name" value="Hexapeptide repeat proteins"/>
    <property type="match status" value="1"/>
</dbReference>
<dbReference type="Gene3D" id="1.10.166.10">
    <property type="entry name" value="Tetrahydrodipicolinate-N-succinyltransferase, N-terminal domain"/>
    <property type="match status" value="1"/>
</dbReference>
<dbReference type="HAMAP" id="MF_00811">
    <property type="entry name" value="DapD"/>
    <property type="match status" value="1"/>
</dbReference>
<dbReference type="InterPro" id="IPR005664">
    <property type="entry name" value="DapD_Trfase_Hexpep_rpt_fam"/>
</dbReference>
<dbReference type="InterPro" id="IPR001451">
    <property type="entry name" value="Hexapep"/>
</dbReference>
<dbReference type="InterPro" id="IPR018357">
    <property type="entry name" value="Hexapep_transf_CS"/>
</dbReference>
<dbReference type="InterPro" id="IPR023180">
    <property type="entry name" value="THP_succinylTrfase_dom1"/>
</dbReference>
<dbReference type="InterPro" id="IPR037133">
    <property type="entry name" value="THP_succinylTrfase_N_sf"/>
</dbReference>
<dbReference type="InterPro" id="IPR011004">
    <property type="entry name" value="Trimer_LpxA-like_sf"/>
</dbReference>
<dbReference type="NCBIfam" id="TIGR00965">
    <property type="entry name" value="dapD"/>
    <property type="match status" value="1"/>
</dbReference>
<dbReference type="NCBIfam" id="NF008808">
    <property type="entry name" value="PRK11830.1"/>
    <property type="match status" value="1"/>
</dbReference>
<dbReference type="PANTHER" id="PTHR19136:SF52">
    <property type="entry name" value="2,3,4,5-TETRAHYDROPYRIDINE-2,6-DICARBOXYLATE N-SUCCINYLTRANSFERASE"/>
    <property type="match status" value="1"/>
</dbReference>
<dbReference type="PANTHER" id="PTHR19136">
    <property type="entry name" value="MOLYBDENUM COFACTOR GUANYLYLTRANSFERASE"/>
    <property type="match status" value="1"/>
</dbReference>
<dbReference type="Pfam" id="PF14602">
    <property type="entry name" value="Hexapep_2"/>
    <property type="match status" value="1"/>
</dbReference>
<dbReference type="Pfam" id="PF14805">
    <property type="entry name" value="THDPS_N_2"/>
    <property type="match status" value="1"/>
</dbReference>
<dbReference type="SUPFAM" id="SSF51161">
    <property type="entry name" value="Trimeric LpxA-like enzymes"/>
    <property type="match status" value="1"/>
</dbReference>
<dbReference type="PROSITE" id="PS00101">
    <property type="entry name" value="HEXAPEP_TRANSFERASES"/>
    <property type="match status" value="1"/>
</dbReference>
<organism>
    <name type="scientific">Acinetobacter baumannii (strain ATCC 17978 / DSM 105126 / CIP 53.77 / LMG 1025 / NCDC KC755 / 5377)</name>
    <dbReference type="NCBI Taxonomy" id="400667"/>
    <lineage>
        <taxon>Bacteria</taxon>
        <taxon>Pseudomonadati</taxon>
        <taxon>Pseudomonadota</taxon>
        <taxon>Gammaproteobacteria</taxon>
        <taxon>Moraxellales</taxon>
        <taxon>Moraxellaceae</taxon>
        <taxon>Acinetobacter</taxon>
        <taxon>Acinetobacter calcoaceticus/baumannii complex</taxon>
    </lineage>
</organism>
<name>DAPD_ACIBT</name>
<gene>
    <name evidence="1" type="primary">dapD</name>
    <name type="ordered locus">A1S_2539</name>
</gene>
<comment type="catalytic activity">
    <reaction evidence="1">
        <text>(S)-2,3,4,5-tetrahydrodipicolinate + succinyl-CoA + H2O = (S)-2-succinylamino-6-oxoheptanedioate + CoA</text>
        <dbReference type="Rhea" id="RHEA:17325"/>
        <dbReference type="ChEBI" id="CHEBI:15377"/>
        <dbReference type="ChEBI" id="CHEBI:15685"/>
        <dbReference type="ChEBI" id="CHEBI:16845"/>
        <dbReference type="ChEBI" id="CHEBI:57287"/>
        <dbReference type="ChEBI" id="CHEBI:57292"/>
        <dbReference type="EC" id="2.3.1.117"/>
    </reaction>
</comment>
<comment type="pathway">
    <text evidence="1">Amino-acid biosynthesis; L-lysine biosynthesis via DAP pathway; LL-2,6-diaminopimelate from (S)-tetrahydrodipicolinate (succinylase route): step 1/3.</text>
</comment>
<comment type="subunit">
    <text evidence="1">Homotrimer.</text>
</comment>
<comment type="subcellular location">
    <subcellularLocation>
        <location evidence="1">Cytoplasm</location>
    </subcellularLocation>
</comment>
<comment type="similarity">
    <text evidence="1">Belongs to the transferase hexapeptide repeat family.</text>
</comment>
<protein>
    <recommendedName>
        <fullName evidence="1">2,3,4,5-tetrahydropyridine-2,6-dicarboxylate N-succinyltransferase</fullName>
        <ecNumber evidence="1">2.3.1.117</ecNumber>
    </recommendedName>
    <alternativeName>
        <fullName evidence="1">Tetrahydrodipicolinate N-succinyltransferase</fullName>
        <shortName evidence="1">THDP succinyltransferase</shortName>
        <shortName evidence="1">THP succinyltransferase</shortName>
        <shortName evidence="1">Tetrahydropicolinate succinylase</shortName>
    </alternativeName>
</protein>